<comment type="catalytic activity">
    <reaction evidence="1">
        <text>D-glucose + ATP = D-glucose 6-phosphate + ADP + H(+)</text>
        <dbReference type="Rhea" id="RHEA:17825"/>
        <dbReference type="ChEBI" id="CHEBI:4167"/>
        <dbReference type="ChEBI" id="CHEBI:15378"/>
        <dbReference type="ChEBI" id="CHEBI:30616"/>
        <dbReference type="ChEBI" id="CHEBI:61548"/>
        <dbReference type="ChEBI" id="CHEBI:456216"/>
        <dbReference type="EC" id="2.7.1.2"/>
    </reaction>
</comment>
<comment type="subcellular location">
    <subcellularLocation>
        <location evidence="1">Cytoplasm</location>
    </subcellularLocation>
</comment>
<comment type="similarity">
    <text evidence="1">Belongs to the bacterial glucokinase family.</text>
</comment>
<sequence length="321" mass="34436">MTKFALVGDVGGTNARLALCDLASGEISRAKTYSGLDYPSLEAVVRVYLEEHQVTVNEGCIAIACPITGDWVAMTNHTWAFSIAEMKRNLGFAHLEIINDFTAVSMAIPMLKAEHLIQFGGSAPVAGKPIAVYGAGTGLGVAHLVHVDKRWVSLPGEGGHVDFAPNSEEEGIILEELRAELGHVSAERVLSGPGLVNLYRAIVKSDGRLPENLQPREVTERALADSCTDCRRALSLFCVIMGRFGGNLALTLGTFGGVYIAGGIVPRFLEFFKASGFRGGFEDKGRFKAYVQDIPVYLIVHENPGLLGSGAHLRQTLGQVL</sequence>
<organism>
    <name type="scientific">Klebsiella pneumoniae (strain 342)</name>
    <dbReference type="NCBI Taxonomy" id="507522"/>
    <lineage>
        <taxon>Bacteria</taxon>
        <taxon>Pseudomonadati</taxon>
        <taxon>Pseudomonadota</taxon>
        <taxon>Gammaproteobacteria</taxon>
        <taxon>Enterobacterales</taxon>
        <taxon>Enterobacteriaceae</taxon>
        <taxon>Klebsiella/Raoultella group</taxon>
        <taxon>Klebsiella</taxon>
        <taxon>Klebsiella pneumoniae complex</taxon>
    </lineage>
</organism>
<accession>B5XVU8</accession>
<feature type="chain" id="PRO_1000127711" description="Glucokinase">
    <location>
        <begin position="1"/>
        <end position="321"/>
    </location>
</feature>
<feature type="binding site" evidence="1">
    <location>
        <begin position="8"/>
        <end position="13"/>
    </location>
    <ligand>
        <name>ATP</name>
        <dbReference type="ChEBI" id="CHEBI:30616"/>
    </ligand>
</feature>
<dbReference type="EC" id="2.7.1.2" evidence="1"/>
<dbReference type="EMBL" id="CP000964">
    <property type="protein sequence ID" value="ACI09742.1"/>
    <property type="molecule type" value="Genomic_DNA"/>
</dbReference>
<dbReference type="SMR" id="B5XVU8"/>
<dbReference type="KEGG" id="kpe:KPK_1401"/>
<dbReference type="HOGENOM" id="CLU_042582_1_0_6"/>
<dbReference type="Proteomes" id="UP000001734">
    <property type="component" value="Chromosome"/>
</dbReference>
<dbReference type="GO" id="GO:0005829">
    <property type="term" value="C:cytosol"/>
    <property type="evidence" value="ECO:0007669"/>
    <property type="project" value="TreeGrafter"/>
</dbReference>
<dbReference type="GO" id="GO:0005524">
    <property type="term" value="F:ATP binding"/>
    <property type="evidence" value="ECO:0007669"/>
    <property type="project" value="UniProtKB-UniRule"/>
</dbReference>
<dbReference type="GO" id="GO:0005536">
    <property type="term" value="F:D-glucose binding"/>
    <property type="evidence" value="ECO:0007669"/>
    <property type="project" value="InterPro"/>
</dbReference>
<dbReference type="GO" id="GO:0004340">
    <property type="term" value="F:glucokinase activity"/>
    <property type="evidence" value="ECO:0007669"/>
    <property type="project" value="UniProtKB-UniRule"/>
</dbReference>
<dbReference type="GO" id="GO:0006096">
    <property type="term" value="P:glycolytic process"/>
    <property type="evidence" value="ECO:0007669"/>
    <property type="project" value="UniProtKB-UniRule"/>
</dbReference>
<dbReference type="CDD" id="cd24008">
    <property type="entry name" value="ASKHA_NBD_GLK"/>
    <property type="match status" value="1"/>
</dbReference>
<dbReference type="FunFam" id="3.30.420.40:FF:000045">
    <property type="entry name" value="Glucokinase"/>
    <property type="match status" value="1"/>
</dbReference>
<dbReference type="FunFam" id="3.40.367.20:FF:000002">
    <property type="entry name" value="Glucokinase"/>
    <property type="match status" value="1"/>
</dbReference>
<dbReference type="Gene3D" id="3.30.420.40">
    <property type="match status" value="1"/>
</dbReference>
<dbReference type="Gene3D" id="3.40.367.20">
    <property type="match status" value="1"/>
</dbReference>
<dbReference type="HAMAP" id="MF_00524">
    <property type="entry name" value="Glucokinase"/>
    <property type="match status" value="1"/>
</dbReference>
<dbReference type="InterPro" id="IPR043129">
    <property type="entry name" value="ATPase_NBD"/>
</dbReference>
<dbReference type="InterPro" id="IPR050201">
    <property type="entry name" value="Bacterial_glucokinase"/>
</dbReference>
<dbReference type="InterPro" id="IPR003836">
    <property type="entry name" value="Glucokinase"/>
</dbReference>
<dbReference type="NCBIfam" id="TIGR00749">
    <property type="entry name" value="glk"/>
    <property type="match status" value="1"/>
</dbReference>
<dbReference type="NCBIfam" id="NF001414">
    <property type="entry name" value="PRK00292.1-1"/>
    <property type="match status" value="1"/>
</dbReference>
<dbReference type="NCBIfam" id="NF001416">
    <property type="entry name" value="PRK00292.1-3"/>
    <property type="match status" value="1"/>
</dbReference>
<dbReference type="PANTHER" id="PTHR47690">
    <property type="entry name" value="GLUCOKINASE"/>
    <property type="match status" value="1"/>
</dbReference>
<dbReference type="PANTHER" id="PTHR47690:SF1">
    <property type="entry name" value="GLUCOKINASE"/>
    <property type="match status" value="1"/>
</dbReference>
<dbReference type="Pfam" id="PF02685">
    <property type="entry name" value="Glucokinase"/>
    <property type="match status" value="1"/>
</dbReference>
<dbReference type="SUPFAM" id="SSF53067">
    <property type="entry name" value="Actin-like ATPase domain"/>
    <property type="match status" value="1"/>
</dbReference>
<reference key="1">
    <citation type="journal article" date="2008" name="PLoS Genet.">
        <title>Complete genome sequence of the N2-fixing broad host range endophyte Klebsiella pneumoniae 342 and virulence predictions verified in mice.</title>
        <authorList>
            <person name="Fouts D.E."/>
            <person name="Tyler H.L."/>
            <person name="DeBoy R.T."/>
            <person name="Daugherty S."/>
            <person name="Ren Q."/>
            <person name="Badger J.H."/>
            <person name="Durkin A.S."/>
            <person name="Huot H."/>
            <person name="Shrivastava S."/>
            <person name="Kothari S."/>
            <person name="Dodson R.J."/>
            <person name="Mohamoud Y."/>
            <person name="Khouri H."/>
            <person name="Roesch L.F.W."/>
            <person name="Krogfelt K.A."/>
            <person name="Struve C."/>
            <person name="Triplett E.W."/>
            <person name="Methe B.A."/>
        </authorList>
    </citation>
    <scope>NUCLEOTIDE SEQUENCE [LARGE SCALE GENOMIC DNA]</scope>
    <source>
        <strain>342</strain>
    </source>
</reference>
<keyword id="KW-0067">ATP-binding</keyword>
<keyword id="KW-0963">Cytoplasm</keyword>
<keyword id="KW-0324">Glycolysis</keyword>
<keyword id="KW-0418">Kinase</keyword>
<keyword id="KW-0547">Nucleotide-binding</keyword>
<keyword id="KW-0808">Transferase</keyword>
<proteinExistence type="inferred from homology"/>
<name>GLK_KLEP3</name>
<evidence type="ECO:0000255" key="1">
    <source>
        <dbReference type="HAMAP-Rule" id="MF_00524"/>
    </source>
</evidence>
<gene>
    <name evidence="1" type="primary">glk</name>
    <name type="ordered locus">KPK_1401</name>
</gene>
<protein>
    <recommendedName>
        <fullName evidence="1">Glucokinase</fullName>
        <ecNumber evidence="1">2.7.1.2</ecNumber>
    </recommendedName>
    <alternativeName>
        <fullName evidence="1">Glucose kinase</fullName>
    </alternativeName>
</protein>